<keyword id="KW-1185">Reference proteome</keyword>
<accession>Q8QVL4</accession>
<organismHost>
    <name type="scientific">Felis catus</name>
    <name type="common">Cat</name>
    <name type="synonym">Felis silvestris catus</name>
    <dbReference type="NCBI Taxonomy" id="9685"/>
</organismHost>
<dbReference type="EMBL" id="AB076003">
    <property type="protein sequence ID" value="BAB90853.1"/>
    <property type="molecule type" value="Genomic_DNA"/>
</dbReference>
<dbReference type="RefSeq" id="YP_003587836.1">
    <property type="nucleotide sequence ID" value="NC_014072.1"/>
</dbReference>
<dbReference type="KEGG" id="vg:9086581"/>
<dbReference type="Proteomes" id="UP000008781">
    <property type="component" value="Segment"/>
</dbReference>
<dbReference type="InterPro" id="IPR004118">
    <property type="entry name" value="HEV_TT_vir_Orf2/Gyrovir_Vp2_N"/>
</dbReference>
<dbReference type="Pfam" id="PF02957">
    <property type="entry name" value="TT_ORF2-like"/>
    <property type="match status" value="1"/>
</dbReference>
<feature type="chain" id="PRO_0000404283" description="Uncharacterized ORF2 protein">
    <location>
        <begin position="1"/>
        <end position="105"/>
    </location>
</feature>
<organism>
    <name type="scientific">Torque teno felis virus (isolate Fc-TTV4)</name>
    <dbReference type="NCBI Taxonomy" id="766188"/>
    <lineage>
        <taxon>Viruses</taxon>
        <taxon>Viruses incertae sedis</taxon>
        <taxon>Anelloviridae</taxon>
        <taxon>Etatorquevirus</taxon>
        <taxon>Etatorquevirus felid1</taxon>
    </lineage>
</organism>
<reference key="1">
    <citation type="journal article" date="2002" name="J. Gen. Virol.">
        <title>Genomic characterization of TT viruses (TTVs) in pigs, cats and dogs and their relatedness with species-specific TTVs in primates and tupaias.</title>
        <authorList>
            <person name="Okamoto H."/>
            <person name="Takahashi M."/>
            <person name="Nishizawa T."/>
            <person name="Tawara A."/>
            <person name="Fukai K."/>
            <person name="Muramatsu U."/>
            <person name="Naito Y."/>
            <person name="Yoshikawa A."/>
        </authorList>
    </citation>
    <scope>NUCLEOTIDE SEQUENCE [GENOMIC DNA]</scope>
</reference>
<sequence length="105" mass="11732">MSASHSLSQSPNLHPDFTYKRQEALWKQLVSAEHRKFCSCGDYTQHFRFPSPVKEDECIRVVGEEGGDGVAVSYHVTKESGDEDPEEVMASIAVGDDGDDDLELW</sequence>
<proteinExistence type="predicted"/>
<protein>
    <recommendedName>
        <fullName>Uncharacterized ORF2 protein</fullName>
    </recommendedName>
</protein>
<gene>
    <name type="ORF">ORF1</name>
</gene>
<name>ORF2_TTVF1</name>